<organism>
    <name type="scientific">Saccharomyces cerevisiae (strain ATCC 204508 / S288c)</name>
    <name type="common">Baker's yeast</name>
    <dbReference type="NCBI Taxonomy" id="559292"/>
    <lineage>
        <taxon>Eukaryota</taxon>
        <taxon>Fungi</taxon>
        <taxon>Dikarya</taxon>
        <taxon>Ascomycota</taxon>
        <taxon>Saccharomycotina</taxon>
        <taxon>Saccharomycetes</taxon>
        <taxon>Saccharomycetales</taxon>
        <taxon>Saccharomycetaceae</taxon>
        <taxon>Saccharomyces</taxon>
    </lineage>
</organism>
<name>CUS1_YEAST</name>
<keyword id="KW-0002">3D-structure</keyword>
<keyword id="KW-0507">mRNA processing</keyword>
<keyword id="KW-0539">Nucleus</keyword>
<keyword id="KW-0597">Phosphoprotein</keyword>
<keyword id="KW-1185">Reference proteome</keyword>
<keyword id="KW-0694">RNA-binding</keyword>
<comment type="function">
    <text>Essential splicing protein required for U2 snRNP binding to pre-mRNA during spliceosome assembly.</text>
</comment>
<comment type="subunit">
    <text evidence="2 3">Belongs to the CWC complex (or CEF1-associated complex), a spliceosome sub-complex reminiscent of a late-stage spliceosome composed of the U2, U5 and U6 snRNAs and at least BUD13, BUD31, BRR2, CDC40, CEF1, CLF1, CUS1, CWC2, CWC15, CWC21, CWC22, CWC23, CWC24, CWC25, CWC27, ECM2, HSH155, IST3, ISY1, LEA1, MSL1, NTC20, PRP8, PRP9, PRP11, PRP19, PRP21, PRP22, PRP45, PRP46, SLU7, SMB1, SMD1, SMD2, SMD3, SMX2, SMX3, SNT309, SNU114, SPP2, SYF1, SYF2, RSE1 and YJU2. Interacts with RDS3.</text>
</comment>
<comment type="interaction">
    <interactant intactId="EBI-654">
        <id>Q02554</id>
    </interactant>
    <interactant intactId="EBI-8579">
        <id>Q99181</id>
        <label>HSH49</label>
    </interactant>
    <organismsDiffer>false</organismsDiffer>
    <experiments>7</experiments>
</comment>
<comment type="subcellular location">
    <subcellularLocation>
        <location evidence="5">Nucleus</location>
    </subcellularLocation>
</comment>
<comment type="miscellaneous">
    <text evidence="4">Present with 1830 molecules/cell in log phase SD medium.</text>
</comment>
<comment type="similarity">
    <text evidence="5">To mammalian SAP 145. Some, to C.elegans ZK632.11.</text>
</comment>
<reference key="1">
    <citation type="journal article" date="1996" name="Genes Dev.">
        <title>CUS1, a suppressor of cold-sensitive U2 snRNA mutations, is a novel yeast splicing factor homologous to human SAP 145.</title>
        <authorList>
            <person name="Wells S.E."/>
            <person name="Neville M."/>
            <person name="Haynes M."/>
            <person name="Wang J."/>
            <person name="Igel H."/>
            <person name="Ares M. Jr."/>
        </authorList>
    </citation>
    <scope>NUCLEOTIDE SEQUENCE [GENOMIC DNA]</scope>
</reference>
<reference key="2">
    <citation type="journal article" date="1997" name="Nature">
        <title>The nucleotide sequence of Saccharomyces cerevisiae chromosome XIII.</title>
        <authorList>
            <person name="Bowman S."/>
            <person name="Churcher C.M."/>
            <person name="Badcock K."/>
            <person name="Brown D."/>
            <person name="Chillingworth T."/>
            <person name="Connor R."/>
            <person name="Dedman K."/>
            <person name="Devlin K."/>
            <person name="Gentles S."/>
            <person name="Hamlin N."/>
            <person name="Hunt S."/>
            <person name="Jagels K."/>
            <person name="Lye G."/>
            <person name="Moule S."/>
            <person name="Odell C."/>
            <person name="Pearson D."/>
            <person name="Rajandream M.A."/>
            <person name="Rice P."/>
            <person name="Skelton J."/>
            <person name="Walsh S.V."/>
            <person name="Whitehead S."/>
            <person name="Barrell B.G."/>
        </authorList>
    </citation>
    <scope>NUCLEOTIDE SEQUENCE [LARGE SCALE GENOMIC DNA]</scope>
    <source>
        <strain>ATCC 204508 / S288c</strain>
    </source>
</reference>
<reference key="3">
    <citation type="journal article" date="2014" name="G3 (Bethesda)">
        <title>The reference genome sequence of Saccharomyces cerevisiae: Then and now.</title>
        <authorList>
            <person name="Engel S.R."/>
            <person name="Dietrich F.S."/>
            <person name="Fisk D.G."/>
            <person name="Binkley G."/>
            <person name="Balakrishnan R."/>
            <person name="Costanzo M.C."/>
            <person name="Dwight S.S."/>
            <person name="Hitz B.C."/>
            <person name="Karra K."/>
            <person name="Nash R.S."/>
            <person name="Weng S."/>
            <person name="Wong E.D."/>
            <person name="Lloyd P."/>
            <person name="Skrzypek M.S."/>
            <person name="Miyasato S.R."/>
            <person name="Simison M."/>
            <person name="Cherry J.M."/>
        </authorList>
    </citation>
    <scope>GENOME REANNOTATION</scope>
    <source>
        <strain>ATCC 204508 / S288c</strain>
    </source>
</reference>
<reference key="4">
    <citation type="journal article" date="2007" name="Genome Res.">
        <title>Approaching a complete repository of sequence-verified protein-encoding clones for Saccharomyces cerevisiae.</title>
        <authorList>
            <person name="Hu Y."/>
            <person name="Rolfs A."/>
            <person name="Bhullar B."/>
            <person name="Murthy T.V.S."/>
            <person name="Zhu C."/>
            <person name="Berger M.F."/>
            <person name="Camargo A.A."/>
            <person name="Kelley F."/>
            <person name="McCarron S."/>
            <person name="Jepson D."/>
            <person name="Richardson A."/>
            <person name="Raphael J."/>
            <person name="Moreira D."/>
            <person name="Taycher E."/>
            <person name="Zuo D."/>
            <person name="Mohr S."/>
            <person name="Kane M.F."/>
            <person name="Williamson J."/>
            <person name="Simpson A.J.G."/>
            <person name="Bulyk M.L."/>
            <person name="Harlow E."/>
            <person name="Marsischky G."/>
            <person name="Kolodner R.D."/>
            <person name="LaBaer J."/>
        </authorList>
    </citation>
    <scope>NUCLEOTIDE SEQUENCE [GENOMIC DNA]</scope>
    <source>
        <strain>ATCC 204508 / S288c</strain>
    </source>
</reference>
<reference key="5">
    <citation type="journal article" date="2002" name="Mol. Cell. Biol.">
        <title>Proteomics analysis reveals stable multiprotein complexes in both fission and budding yeasts containing Myb-related Cdc5p/Cef1p, novel pre-mRNA splicing factors, and snRNAs.</title>
        <authorList>
            <person name="Ohi M.D."/>
            <person name="Link A.J."/>
            <person name="Ren L."/>
            <person name="Jennings J.L."/>
            <person name="McDonald W.H."/>
            <person name="Gould K.L."/>
        </authorList>
    </citation>
    <scope>IDENTIFICATION IN THE CWC COMPLEX</scope>
    <scope>IDENTIFICATION BY MASS SPECTROMETRY</scope>
</reference>
<reference key="6">
    <citation type="journal article" date="2003" name="Mol. Cell. Biol.">
        <title>Rds3p is required for stable U2 snRNP recruitment to the splicing apparatus.</title>
        <authorList>
            <person name="Wang Q."/>
            <person name="Rymond B.C."/>
        </authorList>
    </citation>
    <scope>INTERACTION WITH RDS3</scope>
</reference>
<reference key="7">
    <citation type="journal article" date="2003" name="Nature">
        <title>Global analysis of protein expression in yeast.</title>
        <authorList>
            <person name="Ghaemmaghami S."/>
            <person name="Huh W.-K."/>
            <person name="Bower K."/>
            <person name="Howson R.W."/>
            <person name="Belle A."/>
            <person name="Dephoure N."/>
            <person name="O'Shea E.K."/>
            <person name="Weissman J.S."/>
        </authorList>
    </citation>
    <scope>LEVEL OF PROTEIN EXPRESSION [LARGE SCALE ANALYSIS]</scope>
</reference>
<reference key="8">
    <citation type="journal article" date="2009" name="Science">
        <title>Global analysis of Cdk1 substrate phosphorylation sites provides insights into evolution.</title>
        <authorList>
            <person name="Holt L.J."/>
            <person name="Tuch B.B."/>
            <person name="Villen J."/>
            <person name="Johnson A.D."/>
            <person name="Gygi S.P."/>
            <person name="Morgan D.O."/>
        </authorList>
    </citation>
    <scope>PHOSPHORYLATION [LARGE SCALE ANALYSIS] AT THR-104; THR-112 AND SER-114</scope>
    <scope>IDENTIFICATION BY MASS SPECTROMETRY [LARGE SCALE ANALYSIS]</scope>
</reference>
<sequence length="436" mass="50253">MARTKSRKRSGNNQNKNASVVNNKAEIAAMIDARRLEQKKKGGVTNSKGKTNKVVDAKLEKEFKDVLQRFQVQENDTPKEITKDEKNNHVVIVEKNPVMNRKHTAEDELEDTPSDGIEEHLSARKRRKTEKPSLSQLKSQVPYPQIIEWYDCDARYPGLLASIKCTKNVIPVPSHWQSKKEYLSGRSLLGKRPFELPDIIKKTNIEQMRSTLPQSGLDGQDEKSLKEASRARVQPKMGALDLDYKKLHDVFFKIGANWKPDHLLCFGDVYYENRNLFEETNWKRMVDHKRPGRISQELRAIMNLPEGQLPPWCMKMKDIGLPTGYPDLKIAGLNWDITNLKGDVYGKIIPNHHSRSKKQGRNYFGALISFETPEFENSKEDTQANAENGRQDDKIDDEVEHKLDHFQEDISEVTSAEEKLERNEEESEKQLYTVLK</sequence>
<feature type="chain" id="PRO_0000079565" description="Cold sensitive U2 snRNA suppressor 1">
    <location>
        <begin position="1"/>
        <end position="436"/>
    </location>
</feature>
<feature type="region of interest" description="Disordered" evidence="1">
    <location>
        <begin position="1"/>
        <end position="22"/>
    </location>
</feature>
<feature type="region of interest" description="Disordered" evidence="1">
    <location>
        <begin position="374"/>
        <end position="436"/>
    </location>
</feature>
<feature type="compositionally biased region" description="Basic residues" evidence="1">
    <location>
        <begin position="1"/>
        <end position="10"/>
    </location>
</feature>
<feature type="compositionally biased region" description="Low complexity" evidence="1">
    <location>
        <begin position="12"/>
        <end position="22"/>
    </location>
</feature>
<feature type="compositionally biased region" description="Basic and acidic residues" evidence="1">
    <location>
        <begin position="389"/>
        <end position="408"/>
    </location>
</feature>
<feature type="modified residue" description="Phosphothreonine" evidence="6">
    <location>
        <position position="104"/>
    </location>
</feature>
<feature type="modified residue" description="Phosphothreonine" evidence="6">
    <location>
        <position position="112"/>
    </location>
</feature>
<feature type="modified residue" description="Phosphoserine" evidence="6">
    <location>
        <position position="114"/>
    </location>
</feature>
<feature type="sequence variant" description="In allele CUS1-54; cold-sensitive growth suppressor.">
    <original>E</original>
    <variation>K</variation>
    <location>
        <position position="181"/>
    </location>
</feature>
<feature type="helix" evidence="7">
    <location>
        <begin position="296"/>
        <end position="302"/>
    </location>
</feature>
<feature type="helix" evidence="7">
    <location>
        <begin position="313"/>
        <end position="319"/>
    </location>
</feature>
<feature type="strand" evidence="7">
    <location>
        <begin position="328"/>
        <end position="331"/>
    </location>
</feature>
<feature type="turn" evidence="7">
    <location>
        <begin position="332"/>
        <end position="334"/>
    </location>
</feature>
<feature type="helix" evidence="7">
    <location>
        <begin position="337"/>
        <end position="339"/>
    </location>
</feature>
<feature type="strand" evidence="7">
    <location>
        <begin position="344"/>
        <end position="348"/>
    </location>
</feature>
<gene>
    <name type="primary">CUS1</name>
    <name type="ordered locus">YMR240C</name>
    <name type="ORF">YM9408.02C</name>
</gene>
<dbReference type="EMBL" id="U27016">
    <property type="protein sequence ID" value="AAB04171.1"/>
    <property type="molecule type" value="Genomic_DNA"/>
</dbReference>
<dbReference type="EMBL" id="Z48756">
    <property type="protein sequence ID" value="CAA88650.1"/>
    <property type="molecule type" value="Genomic_DNA"/>
</dbReference>
<dbReference type="EMBL" id="AY723856">
    <property type="protein sequence ID" value="AAU09773.1"/>
    <property type="molecule type" value="Genomic_DNA"/>
</dbReference>
<dbReference type="EMBL" id="BK006946">
    <property type="protein sequence ID" value="DAA10140.1"/>
    <property type="molecule type" value="Genomic_DNA"/>
</dbReference>
<dbReference type="PIR" id="S56054">
    <property type="entry name" value="S56054"/>
</dbReference>
<dbReference type="RefSeq" id="NP_013967.1">
    <property type="nucleotide sequence ID" value="NM_001182747.1"/>
</dbReference>
<dbReference type="PDB" id="5GM6">
    <property type="method" value="EM"/>
    <property type="resolution" value="3.50 A"/>
    <property type="chains" value="H=1-436"/>
</dbReference>
<dbReference type="PDB" id="5LSB">
    <property type="method" value="X-ray"/>
    <property type="resolution" value="2.70 A"/>
    <property type="chains" value="B/D/H=290-368"/>
</dbReference>
<dbReference type="PDB" id="5LSL">
    <property type="method" value="X-ray"/>
    <property type="resolution" value="1.65 A"/>
    <property type="chains" value="E/F/G/H=290-368"/>
</dbReference>
<dbReference type="PDB" id="5NRL">
    <property type="method" value="EM"/>
    <property type="resolution" value="7.20 A"/>
    <property type="chains" value="Q=1-435"/>
</dbReference>
<dbReference type="PDB" id="5ZWM">
    <property type="method" value="EM"/>
    <property type="resolution" value="3.40 A"/>
    <property type="chains" value="2=1-436"/>
</dbReference>
<dbReference type="PDB" id="5ZWO">
    <property type="method" value="EM"/>
    <property type="resolution" value="3.90 A"/>
    <property type="chains" value="2=1-436"/>
</dbReference>
<dbReference type="PDB" id="6G90">
    <property type="method" value="EM"/>
    <property type="resolution" value="4.00 A"/>
    <property type="chains" value="Q=1-435"/>
</dbReference>
<dbReference type="PDB" id="7OQB">
    <property type="method" value="EM"/>
    <property type="resolution" value="9.00 A"/>
    <property type="chains" value="Q=1-436"/>
</dbReference>
<dbReference type="PDB" id="7OQE">
    <property type="method" value="EM"/>
    <property type="resolution" value="5.90 A"/>
    <property type="chains" value="Q=1-436"/>
</dbReference>
<dbReference type="PDBsum" id="5GM6"/>
<dbReference type="PDBsum" id="5LSB"/>
<dbReference type="PDBsum" id="5LSL"/>
<dbReference type="PDBsum" id="5NRL"/>
<dbReference type="PDBsum" id="5ZWM"/>
<dbReference type="PDBsum" id="5ZWO"/>
<dbReference type="PDBsum" id="6G90"/>
<dbReference type="PDBsum" id="7OQB"/>
<dbReference type="PDBsum" id="7OQE"/>
<dbReference type="EMDB" id="EMD-13028"/>
<dbReference type="EMDB" id="EMD-13033"/>
<dbReference type="EMDB" id="EMD-3683"/>
<dbReference type="EMDB" id="EMD-4364"/>
<dbReference type="EMDB" id="EMD-6972"/>
<dbReference type="EMDB" id="EMD-6974"/>
<dbReference type="EMDB" id="EMD-9524"/>
<dbReference type="SMR" id="Q02554"/>
<dbReference type="BioGRID" id="35419">
    <property type="interactions" value="257"/>
</dbReference>
<dbReference type="ComplexPortal" id="CPX-1647">
    <property type="entry name" value="SF3B complex"/>
</dbReference>
<dbReference type="ComplexPortal" id="CPX-1651">
    <property type="entry name" value="PRP19-associated complex"/>
</dbReference>
<dbReference type="ComplexPortal" id="CPX-26">
    <property type="entry name" value="U2 small nuclear ribonucleoprotein complex"/>
</dbReference>
<dbReference type="DIP" id="DIP-910N"/>
<dbReference type="FunCoup" id="Q02554">
    <property type="interactions" value="288"/>
</dbReference>
<dbReference type="IntAct" id="Q02554">
    <property type="interactions" value="51"/>
</dbReference>
<dbReference type="MINT" id="Q02554"/>
<dbReference type="STRING" id="4932.YMR240C"/>
<dbReference type="iPTMnet" id="Q02554"/>
<dbReference type="PaxDb" id="4932-YMR240C"/>
<dbReference type="PeptideAtlas" id="Q02554"/>
<dbReference type="TopDownProteomics" id="Q02554"/>
<dbReference type="EnsemblFungi" id="YMR240C_mRNA">
    <property type="protein sequence ID" value="YMR240C"/>
    <property type="gene ID" value="YMR240C"/>
</dbReference>
<dbReference type="GeneID" id="855281"/>
<dbReference type="KEGG" id="sce:YMR240C"/>
<dbReference type="AGR" id="SGD:S000004853"/>
<dbReference type="SGD" id="S000004853">
    <property type="gene designation" value="CUS1"/>
</dbReference>
<dbReference type="VEuPathDB" id="FungiDB:YMR240C"/>
<dbReference type="eggNOG" id="KOG2330">
    <property type="taxonomic scope" value="Eukaryota"/>
</dbReference>
<dbReference type="GeneTree" id="ENSGT00390000006734"/>
<dbReference type="HOGENOM" id="CLU_014435_2_1_1"/>
<dbReference type="InParanoid" id="Q02554"/>
<dbReference type="OMA" id="IEWFDCD"/>
<dbReference type="OrthoDB" id="10260794at2759"/>
<dbReference type="BioCyc" id="YEAST:G3O-32920-MONOMER"/>
<dbReference type="BioGRID-ORCS" id="855281">
    <property type="hits" value="6 hits in 10 CRISPR screens"/>
</dbReference>
<dbReference type="PRO" id="PR:Q02554"/>
<dbReference type="Proteomes" id="UP000002311">
    <property type="component" value="Chromosome XIII"/>
</dbReference>
<dbReference type="RNAct" id="Q02554">
    <property type="molecule type" value="protein"/>
</dbReference>
<dbReference type="GO" id="GO:0071013">
    <property type="term" value="C:catalytic step 2 spliceosome"/>
    <property type="evidence" value="ECO:0000318"/>
    <property type="project" value="GO_Central"/>
</dbReference>
<dbReference type="GO" id="GO:0005634">
    <property type="term" value="C:nucleus"/>
    <property type="evidence" value="ECO:0000303"/>
    <property type="project" value="ComplexPortal"/>
</dbReference>
<dbReference type="GO" id="GO:0071011">
    <property type="term" value="C:precatalytic spliceosome"/>
    <property type="evidence" value="ECO:0000318"/>
    <property type="project" value="GO_Central"/>
</dbReference>
<dbReference type="GO" id="GO:0000974">
    <property type="term" value="C:Prp19 complex"/>
    <property type="evidence" value="ECO:0000353"/>
    <property type="project" value="ComplexPortal"/>
</dbReference>
<dbReference type="GO" id="GO:0005681">
    <property type="term" value="C:spliceosomal complex"/>
    <property type="evidence" value="ECO:0000303"/>
    <property type="project" value="ComplexPortal"/>
</dbReference>
<dbReference type="GO" id="GO:0005686">
    <property type="term" value="C:U2 snRNP"/>
    <property type="evidence" value="ECO:0000314"/>
    <property type="project" value="SGD"/>
</dbReference>
<dbReference type="GO" id="GO:0071004">
    <property type="term" value="C:U2-type prespliceosome"/>
    <property type="evidence" value="ECO:0000314"/>
    <property type="project" value="SGD"/>
</dbReference>
<dbReference type="GO" id="GO:0005684">
    <property type="term" value="C:U2-type spliceosomal complex"/>
    <property type="evidence" value="ECO:0000353"/>
    <property type="project" value="ComplexPortal"/>
</dbReference>
<dbReference type="GO" id="GO:0003723">
    <property type="term" value="F:RNA binding"/>
    <property type="evidence" value="ECO:0007669"/>
    <property type="project" value="UniProtKB-KW"/>
</dbReference>
<dbReference type="GO" id="GO:0000398">
    <property type="term" value="P:mRNA splicing, via spliceosome"/>
    <property type="evidence" value="ECO:0000353"/>
    <property type="project" value="SGD"/>
</dbReference>
<dbReference type="GO" id="GO:0000245">
    <property type="term" value="P:spliceosomal complex assembly"/>
    <property type="evidence" value="ECO:0000314"/>
    <property type="project" value="SGD"/>
</dbReference>
<dbReference type="GO" id="GO:1903241">
    <property type="term" value="P:U2-type prespliceosome assembly"/>
    <property type="evidence" value="ECO:0000303"/>
    <property type="project" value="ComplexPortal"/>
</dbReference>
<dbReference type="DisProt" id="DP01978"/>
<dbReference type="InterPro" id="IPR007180">
    <property type="entry name" value="DUF382"/>
</dbReference>
<dbReference type="InterPro" id="IPR006568">
    <property type="entry name" value="PSP_pro-rich"/>
</dbReference>
<dbReference type="InterPro" id="IPR052584">
    <property type="entry name" value="U2_snRNP_Complex_Component"/>
</dbReference>
<dbReference type="PANTHER" id="PTHR12785">
    <property type="entry name" value="SPLICING FACTOR 3B"/>
    <property type="match status" value="1"/>
</dbReference>
<dbReference type="PANTHER" id="PTHR12785:SF6">
    <property type="entry name" value="SPLICING FACTOR 3B SUBUNIT 2"/>
    <property type="match status" value="1"/>
</dbReference>
<dbReference type="Pfam" id="PF04037">
    <property type="entry name" value="DUF382"/>
    <property type="match status" value="1"/>
</dbReference>
<dbReference type="Pfam" id="PF04046">
    <property type="entry name" value="PSP"/>
    <property type="match status" value="1"/>
</dbReference>
<dbReference type="SMART" id="SM00581">
    <property type="entry name" value="PSP"/>
    <property type="match status" value="1"/>
</dbReference>
<proteinExistence type="evidence at protein level"/>
<evidence type="ECO:0000256" key="1">
    <source>
        <dbReference type="SAM" id="MobiDB-lite"/>
    </source>
</evidence>
<evidence type="ECO:0000269" key="2">
    <source>
    </source>
</evidence>
<evidence type="ECO:0000269" key="3">
    <source>
    </source>
</evidence>
<evidence type="ECO:0000269" key="4">
    <source>
    </source>
</evidence>
<evidence type="ECO:0000305" key="5"/>
<evidence type="ECO:0007744" key="6">
    <source>
    </source>
</evidence>
<evidence type="ECO:0007829" key="7">
    <source>
        <dbReference type="PDB" id="5LSL"/>
    </source>
</evidence>
<accession>Q02554</accession>
<accession>D6W066</accession>
<accession>Q04012</accession>
<protein>
    <recommendedName>
        <fullName>Cold sensitive U2 snRNA suppressor 1</fullName>
    </recommendedName>
</protein>